<proteinExistence type="inferred from homology"/>
<comment type="function">
    <text evidence="1">Essential protein that is required for a late step of 50S ribosomal subunit assembly. Has GTPase activity that is stimulated by interaction with the immature 50S ribosome subunit. Binds to the 23S rRNA. Required for the association of ribosomal proteins rplP and rpmA with the large subunit (By similarity).</text>
</comment>
<comment type="subunit">
    <text evidence="1">Interacts with ctc. Interacts with the immature 50S ribosome subunit. 2 molecules of rbgA bind to one 50S subunit (By similarity).</text>
</comment>
<comment type="subcellular location">
    <subcellularLocation>
        <location evidence="1 3">Cytoplasm</location>
    </subcellularLocation>
</comment>
<comment type="similarity">
    <text evidence="2">Belongs to the TRAFAC class YlqF/YawG GTPase family. MTG1 subfamily.</text>
</comment>
<sequence>MTIQWFPGHMAKARRQVTEKLKLIDIVYELVDARIPQSSRNPMIDEIIVNKPRIVLLNKVDKADPRVTQQWLDYYKEQGIYALAIDAQAGKGMKQIVSSSKELLQEKFDRMRAKGVKKPRAIRAMIVGIPNVGKSTLINRLASKKIAKTGDRPGVTQAQQWIKVGNELELLDTPGILWPKFEDETVGYKLATTGAIKDTILNMQDVAVYALRFLTSHYPEQLKQRYNLNEIPEDIVELFDAIGSRRGCLMGGGMVDYDKTAELVLREIRTDKIGTFTFDDPSEAEQPL</sequence>
<reference evidence="4" key="1">
    <citation type="journal article" date="2011" name="J. Bacteriol.">
        <title>Genome sequences of the biotechnologically important Bacillus megaterium strains QM B1551 and DSM319.</title>
        <authorList>
            <person name="Eppinger M."/>
            <person name="Bunk B."/>
            <person name="Johns M.A."/>
            <person name="Edirisinghe J.N."/>
            <person name="Kutumbaka K.K."/>
            <person name="Koenig S.S."/>
            <person name="Creasy H.H."/>
            <person name="Rosovitz M.J."/>
            <person name="Riley D.R."/>
            <person name="Daugherty S."/>
            <person name="Martin M."/>
            <person name="Elbourne L.D."/>
            <person name="Paulsen I."/>
            <person name="Biedendieck R."/>
            <person name="Braun C."/>
            <person name="Grayburn S."/>
            <person name="Dhingra S."/>
            <person name="Lukyanchuk V."/>
            <person name="Ball B."/>
            <person name="Ul-Qamar R."/>
            <person name="Seibel J."/>
            <person name="Bremer E."/>
            <person name="Jahn D."/>
            <person name="Ravel J."/>
            <person name="Vary P.S."/>
        </authorList>
    </citation>
    <scope>NUCLEOTIDE SEQUENCE [LARGE SCALE GENOMIC DNA]</scope>
    <source>
        <strain evidence="4">DSM 319 / IMG 1521</strain>
    </source>
</reference>
<name>RBGA_PRIM3</name>
<dbReference type="EMBL" id="CP001982">
    <property type="protein sequence ID" value="ADF41024.1"/>
    <property type="molecule type" value="Genomic_DNA"/>
</dbReference>
<dbReference type="RefSeq" id="WP_013084807.1">
    <property type="nucleotide sequence ID" value="NC_014103.1"/>
</dbReference>
<dbReference type="SMR" id="D5DJL5"/>
<dbReference type="KEGG" id="bmd:BMD_4194"/>
<dbReference type="PATRIC" id="fig|592022.4.peg.4191"/>
<dbReference type="HOGENOM" id="CLU_011106_1_0_9"/>
<dbReference type="Proteomes" id="UP000002365">
    <property type="component" value="Chromosome"/>
</dbReference>
<dbReference type="GO" id="GO:0005737">
    <property type="term" value="C:cytoplasm"/>
    <property type="evidence" value="ECO:0007669"/>
    <property type="project" value="UniProtKB-SubCell"/>
</dbReference>
<dbReference type="GO" id="GO:0005525">
    <property type="term" value="F:GTP binding"/>
    <property type="evidence" value="ECO:0007669"/>
    <property type="project" value="UniProtKB-KW"/>
</dbReference>
<dbReference type="GO" id="GO:0003924">
    <property type="term" value="F:GTPase activity"/>
    <property type="evidence" value="ECO:0007669"/>
    <property type="project" value="TreeGrafter"/>
</dbReference>
<dbReference type="GO" id="GO:0003723">
    <property type="term" value="F:RNA binding"/>
    <property type="evidence" value="ECO:0007669"/>
    <property type="project" value="UniProtKB-KW"/>
</dbReference>
<dbReference type="GO" id="GO:0042254">
    <property type="term" value="P:ribosome biogenesis"/>
    <property type="evidence" value="ECO:0007669"/>
    <property type="project" value="UniProtKB-KW"/>
</dbReference>
<dbReference type="GO" id="GO:0006412">
    <property type="term" value="P:translation"/>
    <property type="evidence" value="ECO:0007669"/>
    <property type="project" value="TreeGrafter"/>
</dbReference>
<dbReference type="CDD" id="cd01856">
    <property type="entry name" value="YlqF"/>
    <property type="match status" value="1"/>
</dbReference>
<dbReference type="FunFam" id="1.10.1580.10:FF:000003">
    <property type="entry name" value="Ribosome biogenesis GTPase A"/>
    <property type="match status" value="1"/>
</dbReference>
<dbReference type="FunFam" id="3.40.50.300:FF:000590">
    <property type="entry name" value="Ribosome biogenesis GTPase A"/>
    <property type="match status" value="1"/>
</dbReference>
<dbReference type="Gene3D" id="1.10.1580.10">
    <property type="match status" value="1"/>
</dbReference>
<dbReference type="Gene3D" id="3.40.50.300">
    <property type="entry name" value="P-loop containing nucleotide triphosphate hydrolases"/>
    <property type="match status" value="1"/>
</dbReference>
<dbReference type="InterPro" id="IPR030378">
    <property type="entry name" value="G_CP_dom"/>
</dbReference>
<dbReference type="InterPro" id="IPR006073">
    <property type="entry name" value="GTP-bd"/>
</dbReference>
<dbReference type="InterPro" id="IPR023179">
    <property type="entry name" value="GTP-bd_ortho_bundle_sf"/>
</dbReference>
<dbReference type="InterPro" id="IPR019991">
    <property type="entry name" value="GTP-bd_ribosome_bgen"/>
</dbReference>
<dbReference type="InterPro" id="IPR016478">
    <property type="entry name" value="GTPase_MTG1"/>
</dbReference>
<dbReference type="InterPro" id="IPR027417">
    <property type="entry name" value="P-loop_NTPase"/>
</dbReference>
<dbReference type="NCBIfam" id="TIGR03596">
    <property type="entry name" value="GTPase_YlqF"/>
    <property type="match status" value="1"/>
</dbReference>
<dbReference type="PANTHER" id="PTHR45782">
    <property type="entry name" value="MITOCHONDRIAL RIBOSOME-ASSOCIATED GTPASE 1"/>
    <property type="match status" value="1"/>
</dbReference>
<dbReference type="PANTHER" id="PTHR45782:SF4">
    <property type="entry name" value="MITOCHONDRIAL RIBOSOME-ASSOCIATED GTPASE 1"/>
    <property type="match status" value="1"/>
</dbReference>
<dbReference type="Pfam" id="PF01926">
    <property type="entry name" value="MMR_HSR1"/>
    <property type="match status" value="1"/>
</dbReference>
<dbReference type="PIRSF" id="PIRSF006230">
    <property type="entry name" value="MG442"/>
    <property type="match status" value="1"/>
</dbReference>
<dbReference type="PRINTS" id="PR00326">
    <property type="entry name" value="GTP1OBG"/>
</dbReference>
<dbReference type="SUPFAM" id="SSF52540">
    <property type="entry name" value="P-loop containing nucleoside triphosphate hydrolases"/>
    <property type="match status" value="1"/>
</dbReference>
<dbReference type="PROSITE" id="PS51721">
    <property type="entry name" value="G_CP"/>
    <property type="match status" value="1"/>
</dbReference>
<organism>
    <name type="scientific">Priestia megaterium (strain DSM 319 / IMG 1521)</name>
    <name type="common">Bacillus megaterium</name>
    <dbReference type="NCBI Taxonomy" id="592022"/>
    <lineage>
        <taxon>Bacteria</taxon>
        <taxon>Bacillati</taxon>
        <taxon>Bacillota</taxon>
        <taxon>Bacilli</taxon>
        <taxon>Bacillales</taxon>
        <taxon>Bacillaceae</taxon>
        <taxon>Priestia</taxon>
    </lineage>
</organism>
<keyword id="KW-0963">Cytoplasm</keyword>
<keyword id="KW-0342">GTP-binding</keyword>
<keyword id="KW-0378">Hydrolase</keyword>
<keyword id="KW-0547">Nucleotide-binding</keyword>
<keyword id="KW-0690">Ribosome biogenesis</keyword>
<keyword id="KW-0694">RNA-binding</keyword>
<feature type="chain" id="PRO_0000409884" description="Ribosome biogenesis GTPase A">
    <location>
        <begin position="1"/>
        <end position="288"/>
    </location>
</feature>
<feature type="domain" description="CP-type G" evidence="2">
    <location>
        <begin position="14"/>
        <end position="179"/>
    </location>
</feature>
<feature type="binding site" evidence="1">
    <location>
        <begin position="58"/>
        <end position="61"/>
    </location>
    <ligand>
        <name>GTP</name>
        <dbReference type="ChEBI" id="CHEBI:37565"/>
    </ligand>
</feature>
<feature type="binding site" evidence="1">
    <location>
        <begin position="131"/>
        <end position="136"/>
    </location>
    <ligand>
        <name>GTP</name>
        <dbReference type="ChEBI" id="CHEBI:37565"/>
    </ligand>
</feature>
<feature type="binding site" evidence="1">
    <location>
        <position position="175"/>
    </location>
    <ligand>
        <name>GTP</name>
        <dbReference type="ChEBI" id="CHEBI:37565"/>
    </ligand>
</feature>
<accession>D5DJL5</accession>
<evidence type="ECO:0000250" key="1">
    <source>
        <dbReference type="UniProtKB" id="O31743"/>
    </source>
</evidence>
<evidence type="ECO:0000255" key="2">
    <source>
        <dbReference type="PROSITE-ProRule" id="PRU01058"/>
    </source>
</evidence>
<evidence type="ECO:0000305" key="3"/>
<evidence type="ECO:0000312" key="4">
    <source>
        <dbReference type="EMBL" id="ADF41024.1"/>
    </source>
</evidence>
<gene>
    <name evidence="4" type="primary">rbgA</name>
    <name evidence="1" type="synonym">ylqF</name>
    <name type="ordered locus">BMD_4194</name>
</gene>
<protein>
    <recommendedName>
        <fullName evidence="4">Ribosome biogenesis GTPase A</fullName>
    </recommendedName>
</protein>